<proteinExistence type="inferred from homology"/>
<name>RL25_ECOLU</name>
<organism>
    <name type="scientific">Escherichia coli O17:K52:H18 (strain UMN026 / ExPEC)</name>
    <dbReference type="NCBI Taxonomy" id="585056"/>
    <lineage>
        <taxon>Bacteria</taxon>
        <taxon>Pseudomonadati</taxon>
        <taxon>Pseudomonadota</taxon>
        <taxon>Gammaproteobacteria</taxon>
        <taxon>Enterobacterales</taxon>
        <taxon>Enterobacteriaceae</taxon>
        <taxon>Escherichia</taxon>
    </lineage>
</organism>
<accession>B7N5E9</accession>
<evidence type="ECO:0000255" key="1">
    <source>
        <dbReference type="HAMAP-Rule" id="MF_01336"/>
    </source>
</evidence>
<evidence type="ECO:0000305" key="2"/>
<keyword id="KW-0687">Ribonucleoprotein</keyword>
<keyword id="KW-0689">Ribosomal protein</keyword>
<keyword id="KW-0694">RNA-binding</keyword>
<keyword id="KW-0699">rRNA-binding</keyword>
<comment type="function">
    <text evidence="1">This is one of the proteins that binds to the 5S RNA in the ribosome where it forms part of the central protuberance.</text>
</comment>
<comment type="subunit">
    <text evidence="1">Part of the 50S ribosomal subunit; part of the 5S rRNA/L5/L18/L25 subcomplex. Contacts the 5S rRNA. Binds to the 5S rRNA independently of L5 and L18.</text>
</comment>
<comment type="similarity">
    <text evidence="1">Belongs to the bacterial ribosomal protein bL25 family.</text>
</comment>
<reference key="1">
    <citation type="journal article" date="2009" name="PLoS Genet.">
        <title>Organised genome dynamics in the Escherichia coli species results in highly diverse adaptive paths.</title>
        <authorList>
            <person name="Touchon M."/>
            <person name="Hoede C."/>
            <person name="Tenaillon O."/>
            <person name="Barbe V."/>
            <person name="Baeriswyl S."/>
            <person name="Bidet P."/>
            <person name="Bingen E."/>
            <person name="Bonacorsi S."/>
            <person name="Bouchier C."/>
            <person name="Bouvet O."/>
            <person name="Calteau A."/>
            <person name="Chiapello H."/>
            <person name="Clermont O."/>
            <person name="Cruveiller S."/>
            <person name="Danchin A."/>
            <person name="Diard M."/>
            <person name="Dossat C."/>
            <person name="Karoui M.E."/>
            <person name="Frapy E."/>
            <person name="Garry L."/>
            <person name="Ghigo J.M."/>
            <person name="Gilles A.M."/>
            <person name="Johnson J."/>
            <person name="Le Bouguenec C."/>
            <person name="Lescat M."/>
            <person name="Mangenot S."/>
            <person name="Martinez-Jehanne V."/>
            <person name="Matic I."/>
            <person name="Nassif X."/>
            <person name="Oztas S."/>
            <person name="Petit M.A."/>
            <person name="Pichon C."/>
            <person name="Rouy Z."/>
            <person name="Ruf C.S."/>
            <person name="Schneider D."/>
            <person name="Tourret J."/>
            <person name="Vacherie B."/>
            <person name="Vallenet D."/>
            <person name="Medigue C."/>
            <person name="Rocha E.P.C."/>
            <person name="Denamur E."/>
        </authorList>
    </citation>
    <scope>NUCLEOTIDE SEQUENCE [LARGE SCALE GENOMIC DNA]</scope>
    <source>
        <strain>UMN026 / ExPEC</strain>
    </source>
</reference>
<feature type="chain" id="PRO_1000142581" description="Large ribosomal subunit protein bL25">
    <location>
        <begin position="1"/>
        <end position="94"/>
    </location>
</feature>
<dbReference type="EMBL" id="CU928163">
    <property type="protein sequence ID" value="CAR13708.1"/>
    <property type="molecule type" value="Genomic_DNA"/>
</dbReference>
<dbReference type="RefSeq" id="WP_000494186.1">
    <property type="nucleotide sequence ID" value="NC_011751.1"/>
</dbReference>
<dbReference type="RefSeq" id="YP_002413236.1">
    <property type="nucleotide sequence ID" value="NC_011751.1"/>
</dbReference>
<dbReference type="SMR" id="B7N5E9"/>
<dbReference type="STRING" id="585056.ECUMN_2522"/>
<dbReference type="KEGG" id="eum:ECUMN_2522"/>
<dbReference type="PATRIC" id="fig|585056.7.peg.2704"/>
<dbReference type="HOGENOM" id="CLU_137946_0_0_6"/>
<dbReference type="Proteomes" id="UP000007097">
    <property type="component" value="Chromosome"/>
</dbReference>
<dbReference type="GO" id="GO:0022625">
    <property type="term" value="C:cytosolic large ribosomal subunit"/>
    <property type="evidence" value="ECO:0007669"/>
    <property type="project" value="TreeGrafter"/>
</dbReference>
<dbReference type="GO" id="GO:0008097">
    <property type="term" value="F:5S rRNA binding"/>
    <property type="evidence" value="ECO:0007669"/>
    <property type="project" value="InterPro"/>
</dbReference>
<dbReference type="GO" id="GO:0003735">
    <property type="term" value="F:structural constituent of ribosome"/>
    <property type="evidence" value="ECO:0007669"/>
    <property type="project" value="InterPro"/>
</dbReference>
<dbReference type="GO" id="GO:0006412">
    <property type="term" value="P:translation"/>
    <property type="evidence" value="ECO:0007669"/>
    <property type="project" value="UniProtKB-UniRule"/>
</dbReference>
<dbReference type="CDD" id="cd00495">
    <property type="entry name" value="Ribosomal_L25_TL5_CTC"/>
    <property type="match status" value="1"/>
</dbReference>
<dbReference type="FunFam" id="2.40.240.10:FF:000002">
    <property type="entry name" value="50S ribosomal protein L25"/>
    <property type="match status" value="1"/>
</dbReference>
<dbReference type="Gene3D" id="2.40.240.10">
    <property type="entry name" value="Ribosomal Protein L25, Chain P"/>
    <property type="match status" value="1"/>
</dbReference>
<dbReference type="HAMAP" id="MF_01336">
    <property type="entry name" value="Ribosomal_bL25"/>
    <property type="match status" value="1"/>
</dbReference>
<dbReference type="InterPro" id="IPR020056">
    <property type="entry name" value="Rbsml_bL25/Gln-tRNA_synth_N"/>
</dbReference>
<dbReference type="InterPro" id="IPR011035">
    <property type="entry name" value="Ribosomal_bL25/Gln-tRNA_synth"/>
</dbReference>
<dbReference type="InterPro" id="IPR020055">
    <property type="entry name" value="Ribosomal_bL25_short"/>
</dbReference>
<dbReference type="InterPro" id="IPR029751">
    <property type="entry name" value="Ribosomal_L25_dom"/>
</dbReference>
<dbReference type="InterPro" id="IPR020930">
    <property type="entry name" value="Ribosomal_uL5_bac-type"/>
</dbReference>
<dbReference type="NCBIfam" id="NF004612">
    <property type="entry name" value="PRK05943.1"/>
    <property type="match status" value="1"/>
</dbReference>
<dbReference type="PANTHER" id="PTHR33284">
    <property type="entry name" value="RIBOSOMAL PROTEIN L25/GLN-TRNA SYNTHETASE, ANTI-CODON-BINDING DOMAIN-CONTAINING PROTEIN"/>
    <property type="match status" value="1"/>
</dbReference>
<dbReference type="PANTHER" id="PTHR33284:SF1">
    <property type="entry name" value="RIBOSOMAL PROTEIN L25_GLN-TRNA SYNTHETASE, ANTI-CODON-BINDING DOMAIN-CONTAINING PROTEIN"/>
    <property type="match status" value="1"/>
</dbReference>
<dbReference type="Pfam" id="PF01386">
    <property type="entry name" value="Ribosomal_L25p"/>
    <property type="match status" value="1"/>
</dbReference>
<dbReference type="SUPFAM" id="SSF50715">
    <property type="entry name" value="Ribosomal protein L25-like"/>
    <property type="match status" value="1"/>
</dbReference>
<gene>
    <name evidence="1" type="primary">rplY</name>
    <name type="ordered locus">ECUMN_2522</name>
</gene>
<sequence length="94" mass="10692">MFTINAEVRKEQGKGASRRLRAANKFPAIIYGGKEAPLAVELDHDKVMNMQVKAEFYSEVLTIVVDGKEIKVKAQDVQRHPYKPKLLHIDFVRA</sequence>
<protein>
    <recommendedName>
        <fullName evidence="1">Large ribosomal subunit protein bL25</fullName>
    </recommendedName>
    <alternativeName>
        <fullName evidence="2">50S ribosomal protein L25</fullName>
    </alternativeName>
</protein>